<sequence length="490" mass="54956">MSQVIKKKRNTFMIGTEYILNSTQLEEAIKSFVHDFCAEKHEIHDQPVVVEAKEHQEDKIKQIKIPEKGRPVNEVVSEMMNEVYRYRGDANHPRFFSFVPGPASSVSWLGDIMTSAYNIHAGGSKLAPMVNCIEQEVLKWLAKQVGFTENPGGVFVSGGSMANITALTAARDNKLTDINLHLGTAYISDQTHSSVAKGLRIIGITDSRIRRIPTNSHFQMDTTKLEEAIETDKKSGYIPFVVIGTAGTTNTGSIDPLTEISALCKKHDMWFHIDGAYGASVLLSPKYKSLLTGTGLADSISWDAHKWLFQTYGCAMVLVKDIRNLFHSFHVNPEYLKDLENDIDNVNTWDIGMELTRPARGLKLWLTLQVLGSDLIGSAIEHGFQLAVWAEEALNPKKDWEIVSPAQMAMINFRYAPKDLTKEEQDILNEKISHRILESGYAAIFTTVLNGKTVLRICAIHPEATQEDMQHTIDLLDQYGREIYTEMKKA</sequence>
<accession>A7B1V0</accession>
<feature type="chain" id="PRO_0000446224" description="Tryptophan decarboxylase">
    <location>
        <begin position="1"/>
        <end position="490"/>
    </location>
</feature>
<feature type="modified residue" description="N6-(pyridoxal phosphate)lysine" evidence="1">
    <location>
        <position position="306"/>
    </location>
</feature>
<feature type="helix" evidence="7">
    <location>
        <begin position="23"/>
        <end position="39"/>
    </location>
</feature>
<feature type="helix" evidence="7">
    <location>
        <begin position="40"/>
        <end position="42"/>
    </location>
</feature>
<feature type="helix" evidence="7">
    <location>
        <begin position="56"/>
        <end position="61"/>
    </location>
</feature>
<feature type="helix" evidence="7">
    <location>
        <begin position="72"/>
        <end position="82"/>
    </location>
</feature>
<feature type="turn" evidence="7">
    <location>
        <begin position="83"/>
        <end position="85"/>
    </location>
</feature>
<feature type="strand" evidence="7">
    <location>
        <begin position="86"/>
        <end position="88"/>
    </location>
</feature>
<feature type="strand" evidence="7">
    <location>
        <begin position="98"/>
        <end position="100"/>
    </location>
</feature>
<feature type="helix" evidence="7">
    <location>
        <begin position="105"/>
        <end position="117"/>
    </location>
</feature>
<feature type="strand" evidence="7">
    <location>
        <begin position="120"/>
        <end position="126"/>
    </location>
</feature>
<feature type="helix" evidence="7">
    <location>
        <begin position="128"/>
        <end position="145"/>
    </location>
</feature>
<feature type="strand" evidence="7">
    <location>
        <begin position="152"/>
        <end position="158"/>
    </location>
</feature>
<feature type="helix" evidence="7">
    <location>
        <begin position="159"/>
        <end position="174"/>
    </location>
</feature>
<feature type="turn" evidence="7">
    <location>
        <begin position="177"/>
        <end position="179"/>
    </location>
</feature>
<feature type="helix" evidence="7">
    <location>
        <begin position="180"/>
        <end position="182"/>
    </location>
</feature>
<feature type="strand" evidence="7">
    <location>
        <begin position="183"/>
        <end position="188"/>
    </location>
</feature>
<feature type="helix" evidence="7">
    <location>
        <begin position="193"/>
        <end position="201"/>
    </location>
</feature>
<feature type="helix" evidence="7">
    <location>
        <begin position="206"/>
        <end position="208"/>
    </location>
</feature>
<feature type="strand" evidence="7">
    <location>
        <begin position="209"/>
        <end position="212"/>
    </location>
</feature>
<feature type="helix" evidence="7">
    <location>
        <begin position="222"/>
        <end position="235"/>
    </location>
</feature>
<feature type="strand" evidence="7">
    <location>
        <begin position="238"/>
        <end position="247"/>
    </location>
</feature>
<feature type="turn" evidence="7">
    <location>
        <begin position="249"/>
        <end position="251"/>
    </location>
</feature>
<feature type="helix" evidence="7">
    <location>
        <begin position="257"/>
        <end position="266"/>
    </location>
</feature>
<feature type="strand" evidence="7">
    <location>
        <begin position="270"/>
        <end position="274"/>
    </location>
</feature>
<feature type="helix" evidence="7">
    <location>
        <begin position="278"/>
        <end position="283"/>
    </location>
</feature>
<feature type="turn" evidence="7">
    <location>
        <begin position="285"/>
        <end position="287"/>
    </location>
</feature>
<feature type="helix" evidence="7">
    <location>
        <begin position="288"/>
        <end position="291"/>
    </location>
</feature>
<feature type="helix" evidence="7">
    <location>
        <begin position="294"/>
        <end position="296"/>
    </location>
</feature>
<feature type="strand" evidence="7">
    <location>
        <begin position="297"/>
        <end position="303"/>
    </location>
</feature>
<feature type="helix" evidence="7">
    <location>
        <begin position="304"/>
        <end position="307"/>
    </location>
</feature>
<feature type="strand" evidence="7">
    <location>
        <begin position="315"/>
        <end position="321"/>
    </location>
</feature>
<feature type="helix" evidence="7">
    <location>
        <begin position="322"/>
        <end position="329"/>
    </location>
</feature>
<feature type="strand" evidence="7">
    <location>
        <begin position="332"/>
        <end position="334"/>
    </location>
</feature>
<feature type="helix" evidence="8">
    <location>
        <begin position="348"/>
        <end position="351"/>
    </location>
</feature>
<feature type="strand" evidence="7">
    <location>
        <begin position="355"/>
        <end position="358"/>
    </location>
</feature>
<feature type="helix" evidence="7">
    <location>
        <begin position="361"/>
        <end position="371"/>
    </location>
</feature>
<feature type="helix" evidence="7">
    <location>
        <begin position="373"/>
        <end position="394"/>
    </location>
</feature>
<feature type="strand" evidence="7">
    <location>
        <begin position="395"/>
        <end position="397"/>
    </location>
</feature>
<feature type="strand" evidence="7">
    <location>
        <begin position="400"/>
        <end position="407"/>
    </location>
</feature>
<feature type="strand" evidence="7">
    <location>
        <begin position="410"/>
        <end position="415"/>
    </location>
</feature>
<feature type="helix" evidence="7">
    <location>
        <begin position="422"/>
        <end position="438"/>
    </location>
</feature>
<feature type="strand" evidence="7">
    <location>
        <begin position="445"/>
        <end position="449"/>
    </location>
</feature>
<feature type="strand" evidence="7">
    <location>
        <begin position="452"/>
        <end position="458"/>
    </location>
</feature>
<feature type="helix" evidence="7">
    <location>
        <begin position="466"/>
        <end position="485"/>
    </location>
</feature>
<comment type="function">
    <text evidence="1">Catalyzes the decarboxylation of tryptophan to tryptamine. Tryptamine is a neurotransmitter that induces the release of serotonin, which is suggested to modulate gastrointestinal motility. Therefore, the tryptophan decarboxylase from the gut bacteria Ruminococcus gnavus (strain ATCC 29149 / VPI C7-9) may influence host brain and behavior. Has weak activity with tyrosine and phenylalanine.</text>
</comment>
<comment type="catalytic activity">
    <reaction evidence="1">
        <text>L-tryptophan + H(+) = tryptamine + CO2</text>
        <dbReference type="Rhea" id="RHEA:30339"/>
        <dbReference type="ChEBI" id="CHEBI:15378"/>
        <dbReference type="ChEBI" id="CHEBI:16526"/>
        <dbReference type="ChEBI" id="CHEBI:57887"/>
        <dbReference type="ChEBI" id="CHEBI:57912"/>
        <dbReference type="EC" id="4.1.1.105"/>
    </reaction>
</comment>
<comment type="cofactor">
    <cofactor evidence="1">
        <name>pyridoxal 5'-phosphate</name>
        <dbReference type="ChEBI" id="CHEBI:597326"/>
    </cofactor>
</comment>
<comment type="activity regulation">
    <text evidence="1">Inhibited by (S)-alpha-fluoromethyltryptophan.</text>
</comment>
<comment type="biophysicochemical properties">
    <kinetics>
        <KM evidence="1">1.1 mM for tryptophan</KM>
        <KM evidence="1">70 mM for phenylalanine</KM>
        <text evidence="1">kcat is 4400 min(-1) with tryptophan as substrate. kcat is 230 min(-1) with phenylalanine as substrate.</text>
    </kinetics>
</comment>
<comment type="subunit">
    <text evidence="1">Homodimer.</text>
</comment>
<comment type="subcellular location">
    <subcellularLocation>
        <location evidence="3">Cytoplasm</location>
    </subcellularLocation>
    <text evidence="1">In vitro, tryptamine is excreted into the extracellular fluid, suggesting that the bacterium has the potential to excrete tryptamine in the host gut lumen.</text>
</comment>
<comment type="similarity">
    <text evidence="3">Belongs to the group II decarboxylase family.</text>
</comment>
<proteinExistence type="evidence at protein level"/>
<evidence type="ECO:0000269" key="1">
    <source>
    </source>
</evidence>
<evidence type="ECO:0000303" key="2">
    <source>
    </source>
</evidence>
<evidence type="ECO:0000305" key="3"/>
<evidence type="ECO:0000312" key="4">
    <source>
        <dbReference type="EMBL" id="EDN78222.1"/>
    </source>
</evidence>
<evidence type="ECO:0007744" key="5">
    <source>
        <dbReference type="PDB" id="4OBU"/>
    </source>
</evidence>
<evidence type="ECO:0007744" key="6">
    <source>
        <dbReference type="PDB" id="4OBV"/>
    </source>
</evidence>
<evidence type="ECO:0007829" key="7">
    <source>
        <dbReference type="PDB" id="4OBU"/>
    </source>
</evidence>
<evidence type="ECO:0007829" key="8">
    <source>
        <dbReference type="PDB" id="4OBV"/>
    </source>
</evidence>
<name>TRPDC_MEDG7</name>
<dbReference type="EC" id="4.1.1.105" evidence="1"/>
<dbReference type="EMBL" id="AAYG02000011">
    <property type="protein sequence ID" value="EDN78222.1"/>
    <property type="molecule type" value="Genomic_DNA"/>
</dbReference>
<dbReference type="PDB" id="4OBU">
    <property type="method" value="X-ray"/>
    <property type="resolution" value="2.80 A"/>
    <property type="chains" value="A/B/C/E/F/G/H/U=1-490"/>
</dbReference>
<dbReference type="PDB" id="4OBV">
    <property type="method" value="X-ray"/>
    <property type="resolution" value="2.84 A"/>
    <property type="chains" value="A/B/C/D=1-490"/>
</dbReference>
<dbReference type="PDBsum" id="4OBU"/>
<dbReference type="PDBsum" id="4OBV"/>
<dbReference type="SMR" id="A7B1V0"/>
<dbReference type="PaxDb" id="411470-RUMGNA_01526"/>
<dbReference type="eggNOG" id="COG0076">
    <property type="taxonomic scope" value="Bacteria"/>
</dbReference>
<dbReference type="EvolutionaryTrace" id="A7B1V0"/>
<dbReference type="Proteomes" id="UP000004410">
    <property type="component" value="Unassembled WGS sequence"/>
</dbReference>
<dbReference type="GO" id="GO:0005737">
    <property type="term" value="C:cytoplasm"/>
    <property type="evidence" value="ECO:0007669"/>
    <property type="project" value="UniProtKB-SubCell"/>
</dbReference>
<dbReference type="GO" id="GO:0036469">
    <property type="term" value="F:L-tryptophan decarboxylase activity"/>
    <property type="evidence" value="ECO:0000314"/>
    <property type="project" value="UniProt"/>
</dbReference>
<dbReference type="GO" id="GO:0030170">
    <property type="term" value="F:pyridoxal phosphate binding"/>
    <property type="evidence" value="ECO:0007669"/>
    <property type="project" value="InterPro"/>
</dbReference>
<dbReference type="GO" id="GO:0006568">
    <property type="term" value="P:L-tryptophan metabolic process"/>
    <property type="evidence" value="ECO:0000314"/>
    <property type="project" value="UniProt"/>
</dbReference>
<dbReference type="Gene3D" id="3.90.1150.170">
    <property type="match status" value="1"/>
</dbReference>
<dbReference type="Gene3D" id="3.90.1150.10">
    <property type="entry name" value="Aspartate Aminotransferase, domain 1"/>
    <property type="match status" value="1"/>
</dbReference>
<dbReference type="Gene3D" id="3.40.640.10">
    <property type="entry name" value="Type I PLP-dependent aspartate aminotransferase-like (Major domain)"/>
    <property type="match status" value="1"/>
</dbReference>
<dbReference type="InterPro" id="IPR010977">
    <property type="entry name" value="Aromatic_deC"/>
</dbReference>
<dbReference type="InterPro" id="IPR002129">
    <property type="entry name" value="PyrdxlP-dep_de-COase"/>
</dbReference>
<dbReference type="InterPro" id="IPR015424">
    <property type="entry name" value="PyrdxlP-dep_Trfase"/>
</dbReference>
<dbReference type="InterPro" id="IPR015421">
    <property type="entry name" value="PyrdxlP-dep_Trfase_major"/>
</dbReference>
<dbReference type="InterPro" id="IPR015422">
    <property type="entry name" value="PyrdxlP-dep_Trfase_small"/>
</dbReference>
<dbReference type="InterPro" id="IPR021115">
    <property type="entry name" value="Pyridoxal-P_BS"/>
</dbReference>
<dbReference type="PANTHER" id="PTHR11999">
    <property type="entry name" value="GROUP II PYRIDOXAL-5-PHOSPHATE DECARBOXYLASE"/>
    <property type="match status" value="1"/>
</dbReference>
<dbReference type="PANTHER" id="PTHR11999:SF70">
    <property type="entry name" value="MIP05841P"/>
    <property type="match status" value="1"/>
</dbReference>
<dbReference type="Pfam" id="PF00282">
    <property type="entry name" value="Pyridoxal_deC"/>
    <property type="match status" value="1"/>
</dbReference>
<dbReference type="PRINTS" id="PR00800">
    <property type="entry name" value="YHDCRBOXLASE"/>
</dbReference>
<dbReference type="SUPFAM" id="SSF53383">
    <property type="entry name" value="PLP-dependent transferases"/>
    <property type="match status" value="1"/>
</dbReference>
<dbReference type="PROSITE" id="PS00392">
    <property type="entry name" value="DDC_GAD_HDC_YDC"/>
    <property type="match status" value="1"/>
</dbReference>
<keyword id="KW-0002">3D-structure</keyword>
<keyword id="KW-0963">Cytoplasm</keyword>
<keyword id="KW-0210">Decarboxylase</keyword>
<keyword id="KW-0456">Lyase</keyword>
<keyword id="KW-0663">Pyridoxal phosphate</keyword>
<protein>
    <recommendedName>
        <fullName evidence="2">Tryptophan decarboxylase</fullName>
        <shortName evidence="2">Trp decarboxylase</shortName>
        <ecNumber evidence="1">4.1.1.105</ecNumber>
    </recommendedName>
</protein>
<organism>
    <name type="scientific">Mediterraneibacter gnavus (strain ATCC 29149 / DSM 114966 / JCM 6515 / VPI C7-9)</name>
    <name type="common">Ruminococcus gnavus</name>
    <dbReference type="NCBI Taxonomy" id="411470"/>
    <lineage>
        <taxon>Bacteria</taxon>
        <taxon>Bacillati</taxon>
        <taxon>Bacillota</taxon>
        <taxon>Clostridia</taxon>
        <taxon>Lachnospirales</taxon>
        <taxon>Lachnospiraceae</taxon>
        <taxon>Mediterraneibacter</taxon>
    </lineage>
</organism>
<gene>
    <name evidence="4" type="ORF">RUMGNA_01526</name>
</gene>
<reference key="1">
    <citation type="submission" date="2007-04" db="EMBL/GenBank/DDBJ databases">
        <authorList>
            <person name="Fulton L."/>
            <person name="Clifton S."/>
            <person name="Fulton B."/>
            <person name="Xu J."/>
            <person name="Minx P."/>
            <person name="Pepin K.H."/>
            <person name="Johnson M."/>
            <person name="Thiruvilangam P."/>
            <person name="Bhonagiri V."/>
            <person name="Nash W.E."/>
            <person name="Mardis E.R."/>
            <person name="Wilson R.K."/>
        </authorList>
    </citation>
    <scope>NUCLEOTIDE SEQUENCE [LARGE SCALE GENOMIC DNA]</scope>
    <source>
        <strain>ATCC 29149 / DSM 114966 / JCM 6515 / VPI C7-9</strain>
    </source>
</reference>
<reference key="2">
    <citation type="submission" date="2007-06" db="EMBL/GenBank/DDBJ databases">
        <title>Draft genome sequence of Ruminococcus gnavus (ATCC 29149).</title>
        <authorList>
            <person name="Sudarsanam P."/>
            <person name="Ley R."/>
            <person name="Guruge J."/>
            <person name="Turnbaugh P.J."/>
            <person name="Mahowald M."/>
            <person name="Liep D."/>
            <person name="Gordon J."/>
        </authorList>
    </citation>
    <scope>NUCLEOTIDE SEQUENCE [LARGE SCALE GENOMIC DNA]</scope>
    <source>
        <strain>ATCC 29149 / DSM 114966 / JCM 6515 / VPI C7-9</strain>
    </source>
</reference>
<reference evidence="5 6" key="3">
    <citation type="journal article" date="2014" name="Cell Host Microbe">
        <title>Discovery and characterization of gut microbiota decarboxylases that can produce the neurotransmitter tryptamine.</title>
        <authorList>
            <person name="Williams B.B."/>
            <person name="Van Benschoten A.H."/>
            <person name="Cimermancic P."/>
            <person name="Donia M.S."/>
            <person name="Zimmermann M."/>
            <person name="Taketani M."/>
            <person name="Ishihara A."/>
            <person name="Kashyap P.C."/>
            <person name="Fraser J.S."/>
            <person name="Fischbach M.A."/>
        </authorList>
    </citation>
    <scope>X-RAY CRYSTALLOGRAPHY (2.80 ANGSTROMS) IN COMPLEXES WITH PYRIDOXAL PHOSPHATE AND INHIBITOR</scope>
    <scope>FUNCTION</scope>
    <scope>CATALYTIC ACTIVITY</scope>
    <scope>COFACTOR</scope>
    <scope>ACTIVITY REGULATION</scope>
    <scope>BIOPHYSICOCHEMICAL PROPERTIES</scope>
    <scope>SUBUNIT</scope>
    <scope>SUBCELLULAR LOCATION</scope>
    <source>
        <strain>ATCC 29149 / DSM 114966 / JCM 6515 / VPI C7-9</strain>
    </source>
</reference>